<comment type="function">
    <text evidence="1">Excises uracil residues from the DNA which can arise as a result of misincorporation of dUMP residues by DNA polymerase or due to deamination of cytosine.</text>
</comment>
<comment type="catalytic activity">
    <reaction evidence="1">
        <text>Hydrolyzes single-stranded DNA or mismatched double-stranded DNA and polynucleotides, releasing free uracil.</text>
        <dbReference type="EC" id="3.2.2.27"/>
    </reaction>
</comment>
<comment type="subcellular location">
    <subcellularLocation>
        <location evidence="1">Cytoplasm</location>
    </subcellularLocation>
</comment>
<comment type="similarity">
    <text evidence="1">Belongs to the uracil-DNA glycosylase (UDG) superfamily. UNG family.</text>
</comment>
<dbReference type="EC" id="3.2.2.27" evidence="1"/>
<dbReference type="EMBL" id="CU459141">
    <property type="protein sequence ID" value="CAM86941.1"/>
    <property type="molecule type" value="Genomic_DNA"/>
</dbReference>
<dbReference type="RefSeq" id="WP_001177527.1">
    <property type="nucleotide sequence ID" value="NZ_JBDGFB010000001.1"/>
</dbReference>
<dbReference type="SMR" id="B0VD25"/>
<dbReference type="EnsemblBacteria" id="CAM86941">
    <property type="protein sequence ID" value="CAM86941"/>
    <property type="gene ID" value="ABAYE2066"/>
</dbReference>
<dbReference type="KEGG" id="aby:ABAYE2066"/>
<dbReference type="HOGENOM" id="CLU_032162_3_0_6"/>
<dbReference type="GO" id="GO:0005737">
    <property type="term" value="C:cytoplasm"/>
    <property type="evidence" value="ECO:0007669"/>
    <property type="project" value="UniProtKB-SubCell"/>
</dbReference>
<dbReference type="GO" id="GO:0004844">
    <property type="term" value="F:uracil DNA N-glycosylase activity"/>
    <property type="evidence" value="ECO:0007669"/>
    <property type="project" value="UniProtKB-UniRule"/>
</dbReference>
<dbReference type="GO" id="GO:0097510">
    <property type="term" value="P:base-excision repair, AP site formation via deaminated base removal"/>
    <property type="evidence" value="ECO:0007669"/>
    <property type="project" value="TreeGrafter"/>
</dbReference>
<dbReference type="CDD" id="cd10027">
    <property type="entry name" value="UDG-F1-like"/>
    <property type="match status" value="1"/>
</dbReference>
<dbReference type="FunFam" id="3.40.470.10:FF:000001">
    <property type="entry name" value="Uracil-DNA glycosylase"/>
    <property type="match status" value="1"/>
</dbReference>
<dbReference type="Gene3D" id="3.40.470.10">
    <property type="entry name" value="Uracil-DNA glycosylase-like domain"/>
    <property type="match status" value="1"/>
</dbReference>
<dbReference type="HAMAP" id="MF_00148">
    <property type="entry name" value="UDG"/>
    <property type="match status" value="1"/>
</dbReference>
<dbReference type="InterPro" id="IPR002043">
    <property type="entry name" value="UDG_fam1"/>
</dbReference>
<dbReference type="InterPro" id="IPR018085">
    <property type="entry name" value="Ura-DNA_Glyclase_AS"/>
</dbReference>
<dbReference type="InterPro" id="IPR005122">
    <property type="entry name" value="Uracil-DNA_glycosylase-like"/>
</dbReference>
<dbReference type="InterPro" id="IPR036895">
    <property type="entry name" value="Uracil-DNA_glycosylase-like_sf"/>
</dbReference>
<dbReference type="NCBIfam" id="NF003588">
    <property type="entry name" value="PRK05254.1-1"/>
    <property type="match status" value="1"/>
</dbReference>
<dbReference type="NCBIfam" id="NF003589">
    <property type="entry name" value="PRK05254.1-2"/>
    <property type="match status" value="1"/>
</dbReference>
<dbReference type="NCBIfam" id="NF003591">
    <property type="entry name" value="PRK05254.1-4"/>
    <property type="match status" value="1"/>
</dbReference>
<dbReference type="NCBIfam" id="NF003592">
    <property type="entry name" value="PRK05254.1-5"/>
    <property type="match status" value="1"/>
</dbReference>
<dbReference type="NCBIfam" id="TIGR00628">
    <property type="entry name" value="ung"/>
    <property type="match status" value="1"/>
</dbReference>
<dbReference type="PANTHER" id="PTHR11264">
    <property type="entry name" value="URACIL-DNA GLYCOSYLASE"/>
    <property type="match status" value="1"/>
</dbReference>
<dbReference type="PANTHER" id="PTHR11264:SF0">
    <property type="entry name" value="URACIL-DNA GLYCOSYLASE"/>
    <property type="match status" value="1"/>
</dbReference>
<dbReference type="Pfam" id="PF03167">
    <property type="entry name" value="UDG"/>
    <property type="match status" value="1"/>
</dbReference>
<dbReference type="SMART" id="SM00986">
    <property type="entry name" value="UDG"/>
    <property type="match status" value="1"/>
</dbReference>
<dbReference type="SMART" id="SM00987">
    <property type="entry name" value="UreE_C"/>
    <property type="match status" value="1"/>
</dbReference>
<dbReference type="SUPFAM" id="SSF52141">
    <property type="entry name" value="Uracil-DNA glycosylase-like"/>
    <property type="match status" value="1"/>
</dbReference>
<dbReference type="PROSITE" id="PS00130">
    <property type="entry name" value="U_DNA_GLYCOSYLASE"/>
    <property type="match status" value="1"/>
</dbReference>
<protein>
    <recommendedName>
        <fullName evidence="1">Uracil-DNA glycosylase</fullName>
        <shortName evidence="1">UDG</shortName>
        <ecNumber evidence="1">3.2.2.27</ecNumber>
    </recommendedName>
</protein>
<gene>
    <name evidence="1" type="primary">ung</name>
    <name type="ordered locus">ABAYE2066</name>
</gene>
<proteinExistence type="inferred from homology"/>
<reference key="1">
    <citation type="journal article" date="2008" name="PLoS ONE">
        <title>Comparative analysis of Acinetobacters: three genomes for three lifestyles.</title>
        <authorList>
            <person name="Vallenet D."/>
            <person name="Nordmann P."/>
            <person name="Barbe V."/>
            <person name="Poirel L."/>
            <person name="Mangenot S."/>
            <person name="Bataille E."/>
            <person name="Dossat C."/>
            <person name="Gas S."/>
            <person name="Kreimeyer A."/>
            <person name="Lenoble P."/>
            <person name="Oztas S."/>
            <person name="Poulain J."/>
            <person name="Segurens B."/>
            <person name="Robert C."/>
            <person name="Abergel C."/>
            <person name="Claverie J.-M."/>
            <person name="Raoult D."/>
            <person name="Medigue C."/>
            <person name="Weissenbach J."/>
            <person name="Cruveiller S."/>
        </authorList>
    </citation>
    <scope>NUCLEOTIDE SEQUENCE [LARGE SCALE GENOMIC DNA]</scope>
    <source>
        <strain>AYE</strain>
    </source>
</reference>
<name>UNG_ACIBY</name>
<evidence type="ECO:0000255" key="1">
    <source>
        <dbReference type="HAMAP-Rule" id="MF_00148"/>
    </source>
</evidence>
<feature type="chain" id="PRO_1000096559" description="Uracil-DNA glycosylase">
    <location>
        <begin position="1"/>
        <end position="237"/>
    </location>
</feature>
<feature type="active site" description="Proton acceptor" evidence="1">
    <location>
        <position position="77"/>
    </location>
</feature>
<organism>
    <name type="scientific">Acinetobacter baumannii (strain AYE)</name>
    <dbReference type="NCBI Taxonomy" id="509173"/>
    <lineage>
        <taxon>Bacteria</taxon>
        <taxon>Pseudomonadati</taxon>
        <taxon>Pseudomonadota</taxon>
        <taxon>Gammaproteobacteria</taxon>
        <taxon>Moraxellales</taxon>
        <taxon>Moraxellaceae</taxon>
        <taxon>Acinetobacter</taxon>
        <taxon>Acinetobacter calcoaceticus/baumannii complex</taxon>
    </lineage>
</organism>
<accession>B0VD25</accession>
<sequence>MQLTEQQQDKLSKVQLEESWKRSLTPFLLSPYMDSLRDFLFQQKQAQKTIYPPSKQIFNALNITPLDHVKVVILGQDPYHGPNQANGLSFSVQRGVALPPSLRNIFHELHTDLGVPISRHGDLTKWAEQGVLLLNSVLTVEAGQPTSHQKQGWEEFTDAVIDVLNEQREHIVFILWGAYAQRKGQRINREKHLVLTAAHPSPLAANRGGFFGCKVFSKTNQYLKQHGIEPIDWQLDA</sequence>
<keyword id="KW-0963">Cytoplasm</keyword>
<keyword id="KW-0227">DNA damage</keyword>
<keyword id="KW-0234">DNA repair</keyword>
<keyword id="KW-0378">Hydrolase</keyword>